<accession>Q8VED8</accession>
<accession>E9PX02</accession>
<protein>
    <recommendedName>
        <fullName>Mitochondrial fission regulator 2</fullName>
    </recommendedName>
    <alternativeName>
        <fullName>DUF729 domain-containing protein 1</fullName>
    </alternativeName>
</protein>
<keyword id="KW-0496">Mitochondrion</keyword>
<keyword id="KW-0597">Phosphoprotein</keyword>
<keyword id="KW-1185">Reference proteome</keyword>
<organism>
    <name type="scientific">Mus musculus</name>
    <name type="common">Mouse</name>
    <dbReference type="NCBI Taxonomy" id="10090"/>
    <lineage>
        <taxon>Eukaryota</taxon>
        <taxon>Metazoa</taxon>
        <taxon>Chordata</taxon>
        <taxon>Craniata</taxon>
        <taxon>Vertebrata</taxon>
        <taxon>Euteleostomi</taxon>
        <taxon>Mammalia</taxon>
        <taxon>Eutheria</taxon>
        <taxon>Euarchontoglires</taxon>
        <taxon>Glires</taxon>
        <taxon>Rodentia</taxon>
        <taxon>Myomorpha</taxon>
        <taxon>Muroidea</taxon>
        <taxon>Muridae</taxon>
        <taxon>Murinae</taxon>
        <taxon>Mus</taxon>
        <taxon>Mus</taxon>
    </lineage>
</organism>
<feature type="chain" id="PRO_0000087165" description="Mitochondrial fission regulator 2">
    <location>
        <begin position="1"/>
        <end position="361"/>
    </location>
</feature>
<feature type="region of interest" description="Disordered" evidence="2">
    <location>
        <begin position="191"/>
        <end position="286"/>
    </location>
</feature>
<feature type="region of interest" description="Disordered" evidence="2">
    <location>
        <begin position="298"/>
        <end position="322"/>
    </location>
</feature>
<feature type="compositionally biased region" description="Pro residues" evidence="2">
    <location>
        <begin position="219"/>
        <end position="231"/>
    </location>
</feature>
<feature type="compositionally biased region" description="Low complexity" evidence="2">
    <location>
        <begin position="232"/>
        <end position="244"/>
    </location>
</feature>
<feature type="compositionally biased region" description="Basic and acidic residues" evidence="2">
    <location>
        <begin position="250"/>
        <end position="282"/>
    </location>
</feature>
<feature type="modified residue" description="Phosphoserine" evidence="1">
    <location>
        <position position="137"/>
    </location>
</feature>
<feature type="modified residue" description="Phosphoserine" evidence="1">
    <location>
        <position position="304"/>
    </location>
</feature>
<feature type="modified residue" description="Phosphoserine" evidence="1">
    <location>
        <position position="340"/>
    </location>
</feature>
<feature type="sequence conflict" description="In Ref. 2; AAH19132." evidence="4" ref="2">
    <original>C</original>
    <variation>F</variation>
    <location>
        <position position="67"/>
    </location>
</feature>
<feature type="sequence conflict" description="In Ref. 2; AAH19132." evidence="4" ref="2">
    <original>D</original>
    <variation>E</variation>
    <location>
        <position position="102"/>
    </location>
</feature>
<feature type="sequence conflict" description="In Ref. 2; AAH19132." evidence="4" ref="2">
    <original>A</original>
    <variation>V</variation>
    <location>
        <position position="179"/>
    </location>
</feature>
<feature type="sequence conflict" description="In Ref. 2; AAH19132." evidence="4" ref="2">
    <original>P</original>
    <variation>L</variation>
    <location>
        <position position="200"/>
    </location>
</feature>
<feature type="sequence conflict" description="In Ref. 2; AAH19132." evidence="4" ref="2">
    <original>P</original>
    <variation>L</variation>
    <location>
        <position position="228"/>
    </location>
</feature>
<feature type="sequence conflict" description="In Ref. 2; AAH19132." evidence="4" ref="2">
    <original>L</original>
    <variation>F</variation>
    <location>
        <position position="240"/>
    </location>
</feature>
<feature type="sequence conflict" description="In Ref. 2; AAH19132." evidence="4" ref="2">
    <original>R</original>
    <variation>K</variation>
    <location>
        <position position="297"/>
    </location>
</feature>
<reference key="1">
    <citation type="journal article" date="2009" name="PLoS Biol.">
        <title>Lineage-specific biology revealed by a finished genome assembly of the mouse.</title>
        <authorList>
            <person name="Church D.M."/>
            <person name="Goodstadt L."/>
            <person name="Hillier L.W."/>
            <person name="Zody M.C."/>
            <person name="Goldstein S."/>
            <person name="She X."/>
            <person name="Bult C.J."/>
            <person name="Agarwala R."/>
            <person name="Cherry J.L."/>
            <person name="DiCuccio M."/>
            <person name="Hlavina W."/>
            <person name="Kapustin Y."/>
            <person name="Meric P."/>
            <person name="Maglott D."/>
            <person name="Birtle Z."/>
            <person name="Marques A.C."/>
            <person name="Graves T."/>
            <person name="Zhou S."/>
            <person name="Teague B."/>
            <person name="Potamousis K."/>
            <person name="Churas C."/>
            <person name="Place M."/>
            <person name="Herschleb J."/>
            <person name="Runnheim R."/>
            <person name="Forrest D."/>
            <person name="Amos-Landgraf J."/>
            <person name="Schwartz D.C."/>
            <person name="Cheng Z."/>
            <person name="Lindblad-Toh K."/>
            <person name="Eichler E.E."/>
            <person name="Ponting C.P."/>
        </authorList>
    </citation>
    <scope>NUCLEOTIDE SEQUENCE [LARGE SCALE GENOMIC DNA]</scope>
    <source>
        <strain>C57BL/6J</strain>
    </source>
</reference>
<reference key="2">
    <citation type="journal article" date="2004" name="Genome Res.">
        <title>The status, quality, and expansion of the NIH full-length cDNA project: the Mammalian Gene Collection (MGC).</title>
        <authorList>
            <consortium name="The MGC Project Team"/>
        </authorList>
    </citation>
    <scope>NUCLEOTIDE SEQUENCE [LARGE SCALE MRNA]</scope>
    <source>
        <strain>Czech II</strain>
        <tissue>Mammary tumor</tissue>
    </source>
</reference>
<reference key="3">
    <citation type="journal article" date="2010" name="Cell">
        <title>A tissue-specific atlas of mouse protein phosphorylation and expression.</title>
        <authorList>
            <person name="Huttlin E.L."/>
            <person name="Jedrychowski M.P."/>
            <person name="Elias J.E."/>
            <person name="Goswami T."/>
            <person name="Rad R."/>
            <person name="Beausoleil S.A."/>
            <person name="Villen J."/>
            <person name="Haas W."/>
            <person name="Sowa M.E."/>
            <person name="Gygi S.P."/>
        </authorList>
    </citation>
    <scope>IDENTIFICATION BY MASS SPECTROMETRY [LARGE SCALE ANALYSIS]</scope>
    <source>
        <tissue>Lung</tissue>
        <tissue>Spleen</tissue>
    </source>
</reference>
<reference key="4">
    <citation type="journal article" date="2010" name="J. Cell. Physiol.">
        <title>The nuclear genes Mtfr1 and Dufd1 regulate mitochondrial dynamic and cellular respiration.</title>
        <authorList>
            <person name="Monticone M."/>
            <person name="Panfoli I."/>
            <person name="Ravera S."/>
            <person name="Puglisi R."/>
            <person name="Jiang M.M."/>
            <person name="Morello R."/>
            <person name="Candiani S."/>
            <person name="Tonachini L."/>
            <person name="Biticchi R."/>
            <person name="Fabiano A."/>
            <person name="Cancedda R."/>
            <person name="Boitani C."/>
            <person name="Castagnola P."/>
        </authorList>
    </citation>
    <scope>FUNCTION IN AEROBIC RESPIRATION</scope>
    <scope>SUBCELLULAR LOCATION</scope>
    <scope>TISSUE SPECIFICITY</scope>
</reference>
<evidence type="ECO:0000250" key="1">
    <source>
        <dbReference type="UniProtKB" id="Q6P444"/>
    </source>
</evidence>
<evidence type="ECO:0000256" key="2">
    <source>
        <dbReference type="SAM" id="MobiDB-lite"/>
    </source>
</evidence>
<evidence type="ECO:0000269" key="3">
    <source>
    </source>
</evidence>
<evidence type="ECO:0000305" key="4"/>
<comment type="function">
    <text evidence="3">May play a role in mitochondrial aerobic respiration essentially in the testis. Can also promote mitochondrial fission.</text>
</comment>
<comment type="subcellular location">
    <subcellularLocation>
        <location evidence="3">Mitochondrion</location>
    </subcellularLocation>
    <text>Associated with membranes.</text>
</comment>
<comment type="tissue specificity">
    <text evidence="3">Expressed predominantly in testis (at protein level). Expressed to a lower extent in spleen.</text>
</comment>
<comment type="similarity">
    <text evidence="4">Belongs to the MTFR1 family.</text>
</comment>
<gene>
    <name type="primary">Mtfr2</name>
    <name type="synonym">Dufd1</name>
    <name type="synonym">Fam54a</name>
</gene>
<proteinExistence type="evidence at protein level"/>
<name>MTFR2_MOUSE</name>
<sequence>MPRDGTNEQRFLELPSPMSFILNILRNVLEYFGVPVDQDLLICQNKNCGSARSIVRIIGRRLPLKPCRRPHFELIPHVNSTESDDYELRVPSFADVLCVANDEEASCLRFRHSLWQKKEERKIAPFYPSKLTWDPSSPGLRQNKTETDDLPVNEAAIKKIAALEDELTFLRSQIAAIVAMQDLRESRETGFIDLSDEQVPPSSATTGLSVEPDHAPSVVLPPPPPPPPPPQFSLQPPSSLPMQPGSANTHDIDSLATEMERQLSGVKKTDDSHHSKSQRLRDVPNMLDVLKDVNKVRLRPVERSPGGRPVQKRKRRSSEWDPVSLISNALKQKFAFQDDSFDRENSSWECSPFSSPETSRF</sequence>
<dbReference type="EMBL" id="AC153845">
    <property type="status" value="NOT_ANNOTATED_CDS"/>
    <property type="molecule type" value="Genomic_DNA"/>
</dbReference>
<dbReference type="EMBL" id="BC019132">
    <property type="protein sequence ID" value="AAH19132.1"/>
    <property type="molecule type" value="mRNA"/>
</dbReference>
<dbReference type="CCDS" id="CCDS48511.1"/>
<dbReference type="RefSeq" id="NP_082206.2">
    <property type="nucleotide sequence ID" value="NM_027930.3"/>
</dbReference>
<dbReference type="SMR" id="Q8VED8"/>
<dbReference type="BioGRID" id="214941">
    <property type="interactions" value="2"/>
</dbReference>
<dbReference type="FunCoup" id="Q8VED8">
    <property type="interactions" value="1618"/>
</dbReference>
<dbReference type="IntAct" id="Q8VED8">
    <property type="interactions" value="1"/>
</dbReference>
<dbReference type="STRING" id="10090.ENSMUSP00000129315"/>
<dbReference type="iPTMnet" id="Q8VED8"/>
<dbReference type="PhosphoSitePlus" id="Q8VED8"/>
<dbReference type="jPOST" id="Q8VED8"/>
<dbReference type="PaxDb" id="10090-ENSMUSP00000129315"/>
<dbReference type="ProteomicsDB" id="287634"/>
<dbReference type="Pumba" id="Q8VED8"/>
<dbReference type="Antibodypedia" id="33003">
    <property type="antibodies" value="83 antibodies from 16 providers"/>
</dbReference>
<dbReference type="DNASU" id="71804"/>
<dbReference type="Ensembl" id="ENSMUST00000169712.3">
    <property type="protein sequence ID" value="ENSMUSP00000129315.2"/>
    <property type="gene ID" value="ENSMUSG00000019992.9"/>
</dbReference>
<dbReference type="GeneID" id="71804"/>
<dbReference type="KEGG" id="mmu:71804"/>
<dbReference type="UCSC" id="uc007eny.2">
    <property type="organism name" value="mouse"/>
</dbReference>
<dbReference type="AGR" id="MGI:1919054"/>
<dbReference type="CTD" id="113115"/>
<dbReference type="MGI" id="MGI:1919054">
    <property type="gene designation" value="Mtfr2"/>
</dbReference>
<dbReference type="VEuPathDB" id="HostDB:ENSMUSG00000019992"/>
<dbReference type="eggNOG" id="ENOG502QUU8">
    <property type="taxonomic scope" value="Eukaryota"/>
</dbReference>
<dbReference type="GeneTree" id="ENSGT00950000183215"/>
<dbReference type="HOGENOM" id="CLU_059135_0_0_1"/>
<dbReference type="InParanoid" id="Q8VED8"/>
<dbReference type="OMA" id="VCQKKEY"/>
<dbReference type="OrthoDB" id="2133332at2759"/>
<dbReference type="PhylomeDB" id="Q8VED8"/>
<dbReference type="TreeFam" id="TF331404"/>
<dbReference type="BioGRID-ORCS" id="71804">
    <property type="hits" value="1 hit in 79 CRISPR screens"/>
</dbReference>
<dbReference type="ChiTaRS" id="Mtfr2">
    <property type="organism name" value="mouse"/>
</dbReference>
<dbReference type="PRO" id="PR:Q8VED8"/>
<dbReference type="Proteomes" id="UP000000589">
    <property type="component" value="Chromosome 10"/>
</dbReference>
<dbReference type="RNAct" id="Q8VED8">
    <property type="molecule type" value="protein"/>
</dbReference>
<dbReference type="Bgee" id="ENSMUSG00000019992">
    <property type="expression patterns" value="Expressed in animal zygote and 85 other cell types or tissues"/>
</dbReference>
<dbReference type="ExpressionAtlas" id="Q8VED8">
    <property type="expression patterns" value="baseline and differential"/>
</dbReference>
<dbReference type="GO" id="GO:0005739">
    <property type="term" value="C:mitochondrion"/>
    <property type="evidence" value="ECO:0000314"/>
    <property type="project" value="UniProtKB"/>
</dbReference>
<dbReference type="GO" id="GO:0009060">
    <property type="term" value="P:aerobic respiration"/>
    <property type="evidence" value="ECO:0000315"/>
    <property type="project" value="UniProtKB"/>
</dbReference>
<dbReference type="GO" id="GO:0000266">
    <property type="term" value="P:mitochondrial fission"/>
    <property type="evidence" value="ECO:0000314"/>
    <property type="project" value="UniProtKB"/>
</dbReference>
<dbReference type="GO" id="GO:0007005">
    <property type="term" value="P:mitochondrion organization"/>
    <property type="evidence" value="ECO:0000314"/>
    <property type="project" value="UniProtKB"/>
</dbReference>
<dbReference type="InterPro" id="IPR007972">
    <property type="entry name" value="Mtfr1"/>
</dbReference>
<dbReference type="PANTHER" id="PTHR14215:SF2">
    <property type="entry name" value="MITOCHONDRIAL FISSION REGULATOR 2"/>
    <property type="match status" value="1"/>
</dbReference>
<dbReference type="PANTHER" id="PTHR14215">
    <property type="entry name" value="PROTEIN OF UNKNOWN FUNCTION DUF729"/>
    <property type="match status" value="1"/>
</dbReference>
<dbReference type="Pfam" id="PF05308">
    <property type="entry name" value="Mito_fiss_reg"/>
    <property type="match status" value="1"/>
</dbReference>